<organism>
    <name type="scientific">Candida glabrata (strain ATCC 2001 / BCRC 20586 / JCM 3761 / NBRC 0622 / NRRL Y-65 / CBS 138)</name>
    <name type="common">Yeast</name>
    <name type="synonym">Nakaseomyces glabratus</name>
    <dbReference type="NCBI Taxonomy" id="284593"/>
    <lineage>
        <taxon>Eukaryota</taxon>
        <taxon>Fungi</taxon>
        <taxon>Dikarya</taxon>
        <taxon>Ascomycota</taxon>
        <taxon>Saccharomycotina</taxon>
        <taxon>Saccharomycetes</taxon>
        <taxon>Saccharomycetales</taxon>
        <taxon>Saccharomycetaceae</taxon>
        <taxon>Nakaseomyces</taxon>
    </lineage>
</organism>
<feature type="chain" id="PRO_0000153152" description="Glutamine synthetase">
    <location>
        <begin position="1"/>
        <end position="372"/>
    </location>
</feature>
<feature type="domain" description="GS beta-grasp" evidence="2">
    <location>
        <begin position="24"/>
        <end position="103"/>
    </location>
</feature>
<feature type="domain" description="GS catalytic" evidence="3">
    <location>
        <begin position="110"/>
        <end position="372"/>
    </location>
</feature>
<accession>Q6FMT6</accession>
<dbReference type="EC" id="6.3.1.2"/>
<dbReference type="EMBL" id="CR380957">
    <property type="protein sequence ID" value="CAG61419.1"/>
    <property type="molecule type" value="Genomic_DNA"/>
</dbReference>
<dbReference type="RefSeq" id="XP_448458.1">
    <property type="nucleotide sequence ID" value="XM_448458.1"/>
</dbReference>
<dbReference type="SMR" id="Q6FMT6"/>
<dbReference type="FunCoup" id="Q6FMT6">
    <property type="interactions" value="861"/>
</dbReference>
<dbReference type="STRING" id="284593.Q6FMT6"/>
<dbReference type="EnsemblFungi" id="CAGL0K05357g-T">
    <property type="protein sequence ID" value="CAGL0K05357g-T-p1"/>
    <property type="gene ID" value="CAGL0K05357g"/>
</dbReference>
<dbReference type="GeneID" id="2890482"/>
<dbReference type="KEGG" id="cgr:2890482"/>
<dbReference type="CGD" id="CAL0134225">
    <property type="gene designation" value="GLN1"/>
</dbReference>
<dbReference type="VEuPathDB" id="FungiDB:B1J91_K05357g"/>
<dbReference type="VEuPathDB" id="FungiDB:CAGL0K05357g"/>
<dbReference type="eggNOG" id="KOG0683">
    <property type="taxonomic scope" value="Eukaryota"/>
</dbReference>
<dbReference type="HOGENOM" id="CLU_036762_1_1_1"/>
<dbReference type="InParanoid" id="Q6FMT6"/>
<dbReference type="OMA" id="DRRPNAN"/>
<dbReference type="Proteomes" id="UP000002428">
    <property type="component" value="Chromosome K"/>
</dbReference>
<dbReference type="GO" id="GO:0005737">
    <property type="term" value="C:cytoplasm"/>
    <property type="evidence" value="ECO:0007669"/>
    <property type="project" value="UniProtKB-SubCell"/>
</dbReference>
<dbReference type="GO" id="GO:0005524">
    <property type="term" value="F:ATP binding"/>
    <property type="evidence" value="ECO:0007669"/>
    <property type="project" value="UniProtKB-KW"/>
</dbReference>
<dbReference type="GO" id="GO:0004356">
    <property type="term" value="F:glutamine synthetase activity"/>
    <property type="evidence" value="ECO:0007669"/>
    <property type="project" value="UniProtKB-EC"/>
</dbReference>
<dbReference type="GO" id="GO:0006542">
    <property type="term" value="P:glutamine biosynthetic process"/>
    <property type="evidence" value="ECO:0007669"/>
    <property type="project" value="InterPro"/>
</dbReference>
<dbReference type="FunFam" id="3.10.20.70:FF:000004">
    <property type="entry name" value="Glutamine synthetase"/>
    <property type="match status" value="1"/>
</dbReference>
<dbReference type="FunFam" id="3.30.590.10:FF:000004">
    <property type="entry name" value="Glutamine synthetase"/>
    <property type="match status" value="1"/>
</dbReference>
<dbReference type="Gene3D" id="3.10.20.70">
    <property type="entry name" value="Glutamine synthetase, N-terminal domain"/>
    <property type="match status" value="1"/>
</dbReference>
<dbReference type="Gene3D" id="3.30.590.10">
    <property type="entry name" value="Glutamine synthetase/guanido kinase, catalytic domain"/>
    <property type="match status" value="1"/>
</dbReference>
<dbReference type="InterPro" id="IPR008147">
    <property type="entry name" value="Gln_synt_N"/>
</dbReference>
<dbReference type="InterPro" id="IPR036651">
    <property type="entry name" value="Gln_synt_N_sf"/>
</dbReference>
<dbReference type="InterPro" id="IPR014746">
    <property type="entry name" value="Gln_synth/guanido_kin_cat_dom"/>
</dbReference>
<dbReference type="InterPro" id="IPR008146">
    <property type="entry name" value="Gln_synth_cat_dom"/>
</dbReference>
<dbReference type="InterPro" id="IPR027303">
    <property type="entry name" value="Gln_synth_gly_rich_site"/>
</dbReference>
<dbReference type="InterPro" id="IPR027302">
    <property type="entry name" value="Gln_synth_N_conserv_site"/>
</dbReference>
<dbReference type="InterPro" id="IPR050292">
    <property type="entry name" value="Glutamine_Synthetase"/>
</dbReference>
<dbReference type="PANTHER" id="PTHR20852">
    <property type="entry name" value="GLUTAMINE SYNTHETASE"/>
    <property type="match status" value="1"/>
</dbReference>
<dbReference type="PANTHER" id="PTHR20852:SF57">
    <property type="entry name" value="GLUTAMINE SYNTHETASE 2 CYTOPLASMIC"/>
    <property type="match status" value="1"/>
</dbReference>
<dbReference type="Pfam" id="PF00120">
    <property type="entry name" value="Gln-synt_C"/>
    <property type="match status" value="1"/>
</dbReference>
<dbReference type="Pfam" id="PF03951">
    <property type="entry name" value="Gln-synt_N"/>
    <property type="match status" value="1"/>
</dbReference>
<dbReference type="SMART" id="SM01230">
    <property type="entry name" value="Gln-synt_C"/>
    <property type="match status" value="1"/>
</dbReference>
<dbReference type="SUPFAM" id="SSF54368">
    <property type="entry name" value="Glutamine synthetase, N-terminal domain"/>
    <property type="match status" value="1"/>
</dbReference>
<dbReference type="SUPFAM" id="SSF55931">
    <property type="entry name" value="Glutamine synthetase/guanido kinase"/>
    <property type="match status" value="1"/>
</dbReference>
<dbReference type="PROSITE" id="PS00180">
    <property type="entry name" value="GLNA_1"/>
    <property type="match status" value="1"/>
</dbReference>
<dbReference type="PROSITE" id="PS00181">
    <property type="entry name" value="GLNA_ATP"/>
    <property type="match status" value="1"/>
</dbReference>
<dbReference type="PROSITE" id="PS51986">
    <property type="entry name" value="GS_BETA_GRASP"/>
    <property type="match status" value="1"/>
</dbReference>
<dbReference type="PROSITE" id="PS51987">
    <property type="entry name" value="GS_CATALYTIC"/>
    <property type="match status" value="1"/>
</dbReference>
<name>GLNA_CANGA</name>
<protein>
    <recommendedName>
        <fullName>Glutamine synthetase</fullName>
        <shortName>GS</shortName>
        <ecNumber>6.3.1.2</ecNumber>
    </recommendedName>
    <alternativeName>
        <fullName>Glutamate--ammonia ligase</fullName>
    </alternativeName>
</protein>
<reference key="1">
    <citation type="journal article" date="2004" name="Nature">
        <title>Genome evolution in yeasts.</title>
        <authorList>
            <person name="Dujon B."/>
            <person name="Sherman D."/>
            <person name="Fischer G."/>
            <person name="Durrens P."/>
            <person name="Casaregola S."/>
            <person name="Lafontaine I."/>
            <person name="de Montigny J."/>
            <person name="Marck C."/>
            <person name="Neuveglise C."/>
            <person name="Talla E."/>
            <person name="Goffard N."/>
            <person name="Frangeul L."/>
            <person name="Aigle M."/>
            <person name="Anthouard V."/>
            <person name="Babour A."/>
            <person name="Barbe V."/>
            <person name="Barnay S."/>
            <person name="Blanchin S."/>
            <person name="Beckerich J.-M."/>
            <person name="Beyne E."/>
            <person name="Bleykasten C."/>
            <person name="Boisrame A."/>
            <person name="Boyer J."/>
            <person name="Cattolico L."/>
            <person name="Confanioleri F."/>
            <person name="de Daruvar A."/>
            <person name="Despons L."/>
            <person name="Fabre E."/>
            <person name="Fairhead C."/>
            <person name="Ferry-Dumazet H."/>
            <person name="Groppi A."/>
            <person name="Hantraye F."/>
            <person name="Hennequin C."/>
            <person name="Jauniaux N."/>
            <person name="Joyet P."/>
            <person name="Kachouri R."/>
            <person name="Kerrest A."/>
            <person name="Koszul R."/>
            <person name="Lemaire M."/>
            <person name="Lesur I."/>
            <person name="Ma L."/>
            <person name="Muller H."/>
            <person name="Nicaud J.-M."/>
            <person name="Nikolski M."/>
            <person name="Oztas S."/>
            <person name="Ozier-Kalogeropoulos O."/>
            <person name="Pellenz S."/>
            <person name="Potier S."/>
            <person name="Richard G.-F."/>
            <person name="Straub M.-L."/>
            <person name="Suleau A."/>
            <person name="Swennen D."/>
            <person name="Tekaia F."/>
            <person name="Wesolowski-Louvel M."/>
            <person name="Westhof E."/>
            <person name="Wirth B."/>
            <person name="Zeniou-Meyer M."/>
            <person name="Zivanovic Y."/>
            <person name="Bolotin-Fukuhara M."/>
            <person name="Thierry A."/>
            <person name="Bouchier C."/>
            <person name="Caudron B."/>
            <person name="Scarpelli C."/>
            <person name="Gaillardin C."/>
            <person name="Weissenbach J."/>
            <person name="Wincker P."/>
            <person name="Souciet J.-L."/>
        </authorList>
    </citation>
    <scope>NUCLEOTIDE SEQUENCE [LARGE SCALE GENOMIC DNA]</scope>
    <source>
        <strain>ATCC 2001 / BCRC 20586 / JCM 3761 / NBRC 0622 / NRRL Y-65 / CBS 138</strain>
    </source>
</reference>
<keyword id="KW-0067">ATP-binding</keyword>
<keyword id="KW-0963">Cytoplasm</keyword>
<keyword id="KW-0436">Ligase</keyword>
<keyword id="KW-0547">Nucleotide-binding</keyword>
<keyword id="KW-1185">Reference proteome</keyword>
<proteinExistence type="inferred from homology"/>
<comment type="catalytic activity">
    <reaction>
        <text>L-glutamate + NH4(+) + ATP = L-glutamine + ADP + phosphate + H(+)</text>
        <dbReference type="Rhea" id="RHEA:16169"/>
        <dbReference type="ChEBI" id="CHEBI:15378"/>
        <dbReference type="ChEBI" id="CHEBI:28938"/>
        <dbReference type="ChEBI" id="CHEBI:29985"/>
        <dbReference type="ChEBI" id="CHEBI:30616"/>
        <dbReference type="ChEBI" id="CHEBI:43474"/>
        <dbReference type="ChEBI" id="CHEBI:58359"/>
        <dbReference type="ChEBI" id="CHEBI:456216"/>
        <dbReference type="EC" id="6.3.1.2"/>
    </reaction>
</comment>
<comment type="subunit">
    <text evidence="1">Homooctamer.</text>
</comment>
<comment type="subcellular location">
    <subcellularLocation>
        <location>Cytoplasm</location>
    </subcellularLocation>
</comment>
<comment type="similarity">
    <text evidence="4">Belongs to the glutamine synthetase family.</text>
</comment>
<gene>
    <name type="primary">GLN1</name>
    <name type="ordered locus">CAGL0K05357g</name>
</gene>
<sequence length="372" mass="42106">MHEHSVEKTQILQKYLELPQNGKVIAEYVWVDGTGNLRSKARTLNKVITSIEQLPEWNFDGSSTNQAPGYDSDIYLKPVAFYPDPFRRGDNITVLAECFNSDGTPNKFNHRHEANKLFQAHKDEEIWFGIEQEYTLFDMYDNVYAWPKGGYPAPQGPYYCGVGAGKVYARDVIEAHYRACLYAGINISGINAEVMPSQWEFQVGPCEGISMGDQLWMARYFLHRVAEEFGVKISFHPKPLKGDWNGAGCHTNVSTKDMRVPGGMKYIEQAIEKLSKRHNEHIKLYGADNEQRLTGRHETASMTSFSSGVANRGASIRIPRPVAKEGFGYFEDRRPASNIDPYLVTGIMCETVCGAIENANMSKEYERETNEQ</sequence>
<evidence type="ECO:0000250" key="1"/>
<evidence type="ECO:0000255" key="2">
    <source>
        <dbReference type="PROSITE-ProRule" id="PRU01330"/>
    </source>
</evidence>
<evidence type="ECO:0000255" key="3">
    <source>
        <dbReference type="PROSITE-ProRule" id="PRU01331"/>
    </source>
</evidence>
<evidence type="ECO:0000305" key="4"/>